<protein>
    <recommendedName>
        <fullName evidence="2">Signaling pathway modulator ZraP</fullName>
    </recommendedName>
    <alternativeName>
        <fullName>Zinc resistance-associated protein</fullName>
    </alternativeName>
</protein>
<comment type="function">
    <text evidence="2">Part of the Zra signaling pathway, an envelope stress response (ESR) system composed of the periplasmic accessory protein ZraP, the histidine kinase ZraS and the transcriptional regulator ZraR. The ZraPSR system contributes to antibiotic resistance and is important for membrane integrity in the presence of membrane-targeting biocides. ZraP acts as a modulator which has both a regulatory and a chaperone function. The zinc-bound form of ZraP modulates the response of the ZraPSR system by inhibiting the expression of the zra genes, probably by interacting with ZraS.</text>
</comment>
<comment type="subcellular location">
    <subcellularLocation>
        <location evidence="2">Periplasm</location>
    </subcellularLocation>
</comment>
<comment type="similarity">
    <text evidence="3">Belongs to the ZraP family.</text>
</comment>
<comment type="sequence caution" evidence="3">
    <conflict type="erroneous initiation">
        <sequence resource="EMBL-CDS" id="AAN83387"/>
    </conflict>
    <text>Extended N-terminus.</text>
</comment>
<feature type="signal peptide" evidence="1">
    <location>
        <begin position="1"/>
        <end position="26"/>
    </location>
</feature>
<feature type="chain" id="PRO_0000041882" description="Signaling pathway modulator ZraP">
    <location>
        <begin position="27"/>
        <end position="139"/>
    </location>
</feature>
<keyword id="KW-0574">Periplasm</keyword>
<keyword id="KW-1185">Reference proteome</keyword>
<keyword id="KW-0732">Signal</keyword>
<keyword id="KW-0346">Stress response</keyword>
<keyword id="KW-0862">Zinc</keyword>
<reference key="1">
    <citation type="journal article" date="2002" name="Proc. Natl. Acad. Sci. U.S.A.">
        <title>Extensive mosaic structure revealed by the complete genome sequence of uropathogenic Escherichia coli.</title>
        <authorList>
            <person name="Welch R.A."/>
            <person name="Burland V."/>
            <person name="Plunkett G. III"/>
            <person name="Redford P."/>
            <person name="Roesch P."/>
            <person name="Rasko D."/>
            <person name="Buckles E.L."/>
            <person name="Liou S.-R."/>
            <person name="Boutin A."/>
            <person name="Hackett J."/>
            <person name="Stroud D."/>
            <person name="Mayhew G.F."/>
            <person name="Rose D.J."/>
            <person name="Zhou S."/>
            <person name="Schwartz D.C."/>
            <person name="Perna N.T."/>
            <person name="Mobley H.L.T."/>
            <person name="Donnenberg M.S."/>
            <person name="Blattner F.R."/>
        </authorList>
    </citation>
    <scope>NUCLEOTIDE SEQUENCE [LARGE SCALE GENOMIC DNA]</scope>
    <source>
        <strain>CFT073 / ATCC 700928 / UPEC</strain>
    </source>
</reference>
<dbReference type="EMBL" id="AE014075">
    <property type="protein sequence ID" value="AAN83387.1"/>
    <property type="status" value="ALT_INIT"/>
    <property type="molecule type" value="Genomic_DNA"/>
</dbReference>
<dbReference type="RefSeq" id="WP_001296714.1">
    <property type="nucleotide sequence ID" value="NZ_CP051263.1"/>
</dbReference>
<dbReference type="SMR" id="Q8CVI9"/>
<dbReference type="STRING" id="199310.c4959"/>
<dbReference type="KEGG" id="ecc:c4959"/>
<dbReference type="eggNOG" id="COG3678">
    <property type="taxonomic scope" value="Bacteria"/>
</dbReference>
<dbReference type="HOGENOM" id="CLU_124884_0_0_6"/>
<dbReference type="Proteomes" id="UP000001410">
    <property type="component" value="Chromosome"/>
</dbReference>
<dbReference type="GO" id="GO:0042597">
    <property type="term" value="C:periplasmic space"/>
    <property type="evidence" value="ECO:0007669"/>
    <property type="project" value="UniProtKB-SubCell"/>
</dbReference>
<dbReference type="FunFam" id="1.20.120.1490:FF:000003">
    <property type="entry name" value="Zinc resistance-associated protein"/>
    <property type="match status" value="1"/>
</dbReference>
<dbReference type="Gene3D" id="1.20.120.1490">
    <property type="match status" value="1"/>
</dbReference>
<dbReference type="InterPro" id="IPR025961">
    <property type="entry name" value="Metal_resist"/>
</dbReference>
<dbReference type="NCBIfam" id="NF008584">
    <property type="entry name" value="PRK11546.1"/>
    <property type="match status" value="1"/>
</dbReference>
<dbReference type="Pfam" id="PF13801">
    <property type="entry name" value="Metal_resist"/>
    <property type="match status" value="1"/>
</dbReference>
<proteinExistence type="inferred from homology"/>
<evidence type="ECO:0000250" key="1"/>
<evidence type="ECO:0000250" key="2">
    <source>
        <dbReference type="UniProtKB" id="P0AAA9"/>
    </source>
</evidence>
<evidence type="ECO:0000305" key="3"/>
<organism>
    <name type="scientific">Escherichia coli O6:H1 (strain CFT073 / ATCC 700928 / UPEC)</name>
    <dbReference type="NCBI Taxonomy" id="199310"/>
    <lineage>
        <taxon>Bacteria</taxon>
        <taxon>Pseudomonadati</taxon>
        <taxon>Pseudomonadota</taxon>
        <taxon>Gammaproteobacteria</taxon>
        <taxon>Enterobacterales</taxon>
        <taxon>Enterobacteriaceae</taxon>
        <taxon>Escherichia</taxon>
    </lineage>
</organism>
<sequence>MKRNTKIALVMMALSAMAMGSTSAFAHGGHGMWQQNAAPLTSEQQTAWQKIHNDFYAQSSALQQQLVTKRYEYNALLAANPPDSSKINAVAKEMENLRQSLDELRVKRDIAMAEAGIPRGTGMGYGGCGGGGHMGMGHW</sequence>
<name>ZRAP_ECOL6</name>
<accession>Q8CVI9</accession>
<gene>
    <name type="primary">zraP</name>
    <name type="ordered locus">c4959</name>
</gene>